<dbReference type="EMBL" id="AY326307">
    <property type="protein sequence ID" value="AAQ96165.1"/>
    <property type="molecule type" value="mRNA"/>
</dbReference>
<dbReference type="SMR" id="Q6EI05"/>
<dbReference type="Proteomes" id="UP000504608">
    <property type="component" value="Unplaced"/>
</dbReference>
<dbReference type="GO" id="GO:0005634">
    <property type="term" value="C:nucleus"/>
    <property type="evidence" value="ECO:0007669"/>
    <property type="project" value="UniProtKB-SubCell"/>
</dbReference>
<dbReference type="GO" id="GO:0009740">
    <property type="term" value="P:gibberellic acid mediated signaling pathway"/>
    <property type="evidence" value="ECO:0007669"/>
    <property type="project" value="UniProtKB-KW"/>
</dbReference>
<dbReference type="FunFam" id="1.10.10.1290:FF:000001">
    <property type="entry name" value="DELLA protein GAI"/>
    <property type="match status" value="1"/>
</dbReference>
<dbReference type="Gene3D" id="1.10.10.1290">
    <property type="entry name" value="Transcriptional regulator DELLA, N-terminal domain"/>
    <property type="match status" value="1"/>
</dbReference>
<dbReference type="InterPro" id="IPR038088">
    <property type="entry name" value="DELLA_N_sf"/>
</dbReference>
<dbReference type="InterPro" id="IPR021914">
    <property type="entry name" value="TF_DELLA_N"/>
</dbReference>
<dbReference type="InterPro" id="IPR005202">
    <property type="entry name" value="TF_GRAS"/>
</dbReference>
<dbReference type="PANTHER" id="PTHR31636">
    <property type="entry name" value="OSJNBA0084A10.13 PROTEIN-RELATED"/>
    <property type="match status" value="1"/>
</dbReference>
<dbReference type="Pfam" id="PF12041">
    <property type="entry name" value="DELLA"/>
    <property type="match status" value="1"/>
</dbReference>
<dbReference type="Pfam" id="PF03514">
    <property type="entry name" value="GRAS"/>
    <property type="match status" value="1"/>
</dbReference>
<dbReference type="SMART" id="SM01129">
    <property type="entry name" value="DELLA"/>
    <property type="match status" value="1"/>
</dbReference>
<dbReference type="PROSITE" id="PS50985">
    <property type="entry name" value="GRAS"/>
    <property type="match status" value="1"/>
</dbReference>
<keyword id="KW-0939">Gibberellin signaling pathway</keyword>
<keyword id="KW-0539">Nucleus</keyword>
<keyword id="KW-0597">Phosphoprotein</keyword>
<keyword id="KW-1185">Reference proteome</keyword>
<keyword id="KW-0678">Repressor</keyword>
<keyword id="KW-0804">Transcription</keyword>
<keyword id="KW-0805">Transcription regulation</keyword>
<keyword id="KW-0832">Ubl conjugation</keyword>
<feature type="chain" id="PRO_0000132242" description="DELLA protein GAIP-B">
    <location>
        <begin position="1"/>
        <end position="587"/>
    </location>
</feature>
<feature type="domain" description="GRAS" evidence="2">
    <location>
        <begin position="209"/>
        <end position="577"/>
    </location>
</feature>
<feature type="region of interest" description="Disordered" evidence="3">
    <location>
        <begin position="1"/>
        <end position="23"/>
    </location>
</feature>
<feature type="region of interest" description="Leucine repeat I (LRI)" evidence="2">
    <location>
        <begin position="216"/>
        <end position="270"/>
    </location>
</feature>
<feature type="region of interest" description="VHIID" evidence="2">
    <location>
        <begin position="288"/>
        <end position="353"/>
    </location>
</feature>
<feature type="region of interest" description="Leucine repeat II (LRII)" evidence="2">
    <location>
        <begin position="367"/>
        <end position="399"/>
    </location>
</feature>
<feature type="region of interest" description="PFYRE" evidence="2">
    <location>
        <begin position="411"/>
        <end position="498"/>
    </location>
</feature>
<feature type="region of interest" description="SAW" evidence="2">
    <location>
        <begin position="501"/>
        <end position="577"/>
    </location>
</feature>
<feature type="short sequence motif" description="DELLA motif">
    <location>
        <begin position="46"/>
        <end position="50"/>
    </location>
</feature>
<feature type="short sequence motif" description="VHIID" evidence="2">
    <location>
        <begin position="319"/>
        <end position="323"/>
    </location>
</feature>
<feature type="short sequence motif" description="LXXLL motif" evidence="2">
    <location>
        <begin position="419"/>
        <end position="423"/>
    </location>
</feature>
<organism>
    <name type="scientific">Cucurbita maxima</name>
    <name type="common">Pumpkin</name>
    <name type="synonym">Winter squash</name>
    <dbReference type="NCBI Taxonomy" id="3661"/>
    <lineage>
        <taxon>Eukaryota</taxon>
        <taxon>Viridiplantae</taxon>
        <taxon>Streptophyta</taxon>
        <taxon>Embryophyta</taxon>
        <taxon>Tracheophyta</taxon>
        <taxon>Spermatophyta</taxon>
        <taxon>Magnoliopsida</taxon>
        <taxon>eudicotyledons</taxon>
        <taxon>Gunneridae</taxon>
        <taxon>Pentapetalae</taxon>
        <taxon>rosids</taxon>
        <taxon>fabids</taxon>
        <taxon>Cucurbitales</taxon>
        <taxon>Cucurbitaceae</taxon>
        <taxon>Cucurbiteae</taxon>
        <taxon>Cucurbita</taxon>
    </lineage>
</organism>
<reference key="1">
    <citation type="journal article" date="2005" name="Plant J.">
        <title>Phloem long-distance trafficking of GIBBERELLIC ACID-INSENSITIVE RNA regulates leaf development.</title>
        <authorList>
            <person name="Haywood V."/>
            <person name="Yu T.-S."/>
            <person name="Huang N.-C."/>
            <person name="Lucas W.J."/>
        </authorList>
    </citation>
    <scope>NUCLEOTIDE SEQUENCE [MRNA]</scope>
</reference>
<proteinExistence type="evidence at transcript level"/>
<evidence type="ECO:0000250" key="1"/>
<evidence type="ECO:0000255" key="2">
    <source>
        <dbReference type="PROSITE-ProRule" id="PRU01191"/>
    </source>
</evidence>
<evidence type="ECO:0000256" key="3">
    <source>
        <dbReference type="SAM" id="MobiDB-lite"/>
    </source>
</evidence>
<evidence type="ECO:0000305" key="4"/>
<name>GAIPB_CUCMA</name>
<gene>
    <name type="primary">GAIPB</name>
</gene>
<accession>Q6EI05</accession>
<comment type="function">
    <text evidence="1">Probable transcriptional regulator that acts as a repressor of the gibberellin (GA) signaling pathway. Probably acts by participating in large multiprotein complexes that represses transcription of GA-inducible genes. Upon GA application, it is degraded by the proteasome, allowing the GA signaling pathway (By similarity).</text>
</comment>
<comment type="subcellular location">
    <subcellularLocation>
        <location evidence="1">Nucleus</location>
    </subcellularLocation>
</comment>
<comment type="domain">
    <text evidence="1">The DELLA motif is required for its GA-induced degradation.</text>
</comment>
<comment type="PTM">
    <text evidence="1">Phosphorylated.</text>
</comment>
<comment type="PTM">
    <text evidence="1">Ubiquitinated. Upon GA application it is ubiquitinated, leading to its subsequent degradation (By similarity).</text>
</comment>
<comment type="similarity">
    <text evidence="4">Belongs to the GRAS family. DELLA subfamily.</text>
</comment>
<sequence length="587" mass="65189">MKREHHHLHPRPDPPSMAAAPNGDTYLNTGKAKLWEEDAQLDGGMDELLAVLGYKVKSSDMAEVAQKLEQLEEAMCQVQDTGLSHLAFDTVHYNPSDLSTWLESMITELHPPPSFPQPHPSQMNDSSFLAPAESSTITSIDYDPQRQTSSLIFEESSSSDYDLKAITSSAIYSPRENKRLKPSSESDSDLFSTSAIGASNSATRPIVLVDSQENGIQLVHALMACAEAVQQNNLNLAEALEKRIGYLAVSQAGAMRKVATFFAEALARRIYRVCPENPLDHSMSDMLQLHFYESSPYLKFAHFTANQAILEAFEGKKRVHVIDFSMNQGMQWPALLQALALRPSGPPAFRLTGIGPPAPDNSDYLQDVGWKLAKLVETINVEFEYRGFVANSLADLDASMLELRPSEVESVVVNSVFELHKLLARPGAIEKVMSVVKQMKPEIMTVVEQEANHNGPVFMDRFTESLHYYSTLFDSLESSPNNQDKMMSEMYLGKQICNVVACEGSDRVEWHETLTQWRTRLCSSGFEPIHLGSNAFKQASMLLALFGSGEGYRVEENNGSLTLGWHTRPLIVTSAWKLGNNSVVVTH</sequence>
<protein>
    <recommendedName>
        <fullName>DELLA protein GAIP-B</fullName>
    </recommendedName>
    <alternativeName>
        <fullName>CmGAIP-B</fullName>
        <shortName>GAIP-B</shortName>
    </alternativeName>
    <alternativeName>
        <fullName>Gibberellic acid-insensitive phloem protein B</fullName>
    </alternativeName>
</protein>